<dbReference type="EC" id="4.2.1.11" evidence="1"/>
<dbReference type="EMBL" id="BA000026">
    <property type="protein sequence ID" value="BAC44164.1"/>
    <property type="molecule type" value="Genomic_DNA"/>
</dbReference>
<dbReference type="RefSeq" id="WP_011077200.1">
    <property type="nucleotide sequence ID" value="NC_004432.1"/>
</dbReference>
<dbReference type="SMR" id="Q8EW32"/>
<dbReference type="FunCoup" id="Q8EW32">
    <property type="interactions" value="174"/>
</dbReference>
<dbReference type="STRING" id="272633.gene:10731490"/>
<dbReference type="KEGG" id="mpe:MYPE3750"/>
<dbReference type="eggNOG" id="COG0148">
    <property type="taxonomic scope" value="Bacteria"/>
</dbReference>
<dbReference type="HOGENOM" id="CLU_031223_2_1_14"/>
<dbReference type="InParanoid" id="Q8EW32"/>
<dbReference type="UniPathway" id="UPA00109">
    <property type="reaction ID" value="UER00187"/>
</dbReference>
<dbReference type="Proteomes" id="UP000002522">
    <property type="component" value="Chromosome"/>
</dbReference>
<dbReference type="GO" id="GO:0009986">
    <property type="term" value="C:cell surface"/>
    <property type="evidence" value="ECO:0007669"/>
    <property type="project" value="UniProtKB-SubCell"/>
</dbReference>
<dbReference type="GO" id="GO:0005576">
    <property type="term" value="C:extracellular region"/>
    <property type="evidence" value="ECO:0007669"/>
    <property type="project" value="UniProtKB-SubCell"/>
</dbReference>
<dbReference type="GO" id="GO:0000015">
    <property type="term" value="C:phosphopyruvate hydratase complex"/>
    <property type="evidence" value="ECO:0007669"/>
    <property type="project" value="InterPro"/>
</dbReference>
<dbReference type="GO" id="GO:0000287">
    <property type="term" value="F:magnesium ion binding"/>
    <property type="evidence" value="ECO:0007669"/>
    <property type="project" value="UniProtKB-UniRule"/>
</dbReference>
<dbReference type="GO" id="GO:0004634">
    <property type="term" value="F:phosphopyruvate hydratase activity"/>
    <property type="evidence" value="ECO:0007669"/>
    <property type="project" value="UniProtKB-UniRule"/>
</dbReference>
<dbReference type="GO" id="GO:0006096">
    <property type="term" value="P:glycolytic process"/>
    <property type="evidence" value="ECO:0007669"/>
    <property type="project" value="UniProtKB-UniRule"/>
</dbReference>
<dbReference type="CDD" id="cd03313">
    <property type="entry name" value="enolase"/>
    <property type="match status" value="1"/>
</dbReference>
<dbReference type="FunFam" id="3.30.390.10:FF:000001">
    <property type="entry name" value="Enolase"/>
    <property type="match status" value="1"/>
</dbReference>
<dbReference type="Gene3D" id="3.20.20.120">
    <property type="entry name" value="Enolase-like C-terminal domain"/>
    <property type="match status" value="1"/>
</dbReference>
<dbReference type="Gene3D" id="3.30.390.10">
    <property type="entry name" value="Enolase-like, N-terminal domain"/>
    <property type="match status" value="1"/>
</dbReference>
<dbReference type="HAMAP" id="MF_00318">
    <property type="entry name" value="Enolase"/>
    <property type="match status" value="1"/>
</dbReference>
<dbReference type="InterPro" id="IPR000941">
    <property type="entry name" value="Enolase"/>
</dbReference>
<dbReference type="InterPro" id="IPR036849">
    <property type="entry name" value="Enolase-like_C_sf"/>
</dbReference>
<dbReference type="InterPro" id="IPR029017">
    <property type="entry name" value="Enolase-like_N"/>
</dbReference>
<dbReference type="InterPro" id="IPR020810">
    <property type="entry name" value="Enolase_C"/>
</dbReference>
<dbReference type="InterPro" id="IPR020809">
    <property type="entry name" value="Enolase_CS"/>
</dbReference>
<dbReference type="InterPro" id="IPR020811">
    <property type="entry name" value="Enolase_N"/>
</dbReference>
<dbReference type="NCBIfam" id="TIGR01060">
    <property type="entry name" value="eno"/>
    <property type="match status" value="1"/>
</dbReference>
<dbReference type="PANTHER" id="PTHR11902">
    <property type="entry name" value="ENOLASE"/>
    <property type="match status" value="1"/>
</dbReference>
<dbReference type="PANTHER" id="PTHR11902:SF1">
    <property type="entry name" value="ENOLASE"/>
    <property type="match status" value="1"/>
</dbReference>
<dbReference type="Pfam" id="PF00113">
    <property type="entry name" value="Enolase_C"/>
    <property type="match status" value="1"/>
</dbReference>
<dbReference type="Pfam" id="PF03952">
    <property type="entry name" value="Enolase_N"/>
    <property type="match status" value="1"/>
</dbReference>
<dbReference type="PIRSF" id="PIRSF001400">
    <property type="entry name" value="Enolase"/>
    <property type="match status" value="1"/>
</dbReference>
<dbReference type="PRINTS" id="PR00148">
    <property type="entry name" value="ENOLASE"/>
</dbReference>
<dbReference type="SFLD" id="SFLDS00001">
    <property type="entry name" value="Enolase"/>
    <property type="match status" value="1"/>
</dbReference>
<dbReference type="SFLD" id="SFLDF00002">
    <property type="entry name" value="enolase"/>
    <property type="match status" value="1"/>
</dbReference>
<dbReference type="SMART" id="SM01192">
    <property type="entry name" value="Enolase_C"/>
    <property type="match status" value="1"/>
</dbReference>
<dbReference type="SMART" id="SM01193">
    <property type="entry name" value="Enolase_N"/>
    <property type="match status" value="1"/>
</dbReference>
<dbReference type="SUPFAM" id="SSF51604">
    <property type="entry name" value="Enolase C-terminal domain-like"/>
    <property type="match status" value="1"/>
</dbReference>
<dbReference type="SUPFAM" id="SSF54826">
    <property type="entry name" value="Enolase N-terminal domain-like"/>
    <property type="match status" value="1"/>
</dbReference>
<dbReference type="PROSITE" id="PS00164">
    <property type="entry name" value="ENOLASE"/>
    <property type="match status" value="1"/>
</dbReference>
<comment type="function">
    <text evidence="1">Catalyzes the reversible conversion of 2-phosphoglycerate (2-PG) into phosphoenolpyruvate (PEP). It is essential for the degradation of carbohydrates via glycolysis.</text>
</comment>
<comment type="catalytic activity">
    <reaction evidence="1">
        <text>(2R)-2-phosphoglycerate = phosphoenolpyruvate + H2O</text>
        <dbReference type="Rhea" id="RHEA:10164"/>
        <dbReference type="ChEBI" id="CHEBI:15377"/>
        <dbReference type="ChEBI" id="CHEBI:58289"/>
        <dbReference type="ChEBI" id="CHEBI:58702"/>
        <dbReference type="EC" id="4.2.1.11"/>
    </reaction>
</comment>
<comment type="cofactor">
    <cofactor evidence="1">
        <name>Mg(2+)</name>
        <dbReference type="ChEBI" id="CHEBI:18420"/>
    </cofactor>
    <text evidence="1">Binds a second Mg(2+) ion via substrate during catalysis.</text>
</comment>
<comment type="pathway">
    <text evidence="1">Carbohydrate degradation; glycolysis; pyruvate from D-glyceraldehyde 3-phosphate: step 4/5.</text>
</comment>
<comment type="subcellular location">
    <subcellularLocation>
        <location evidence="1">Cytoplasm</location>
    </subcellularLocation>
    <subcellularLocation>
        <location evidence="1">Secreted</location>
    </subcellularLocation>
    <subcellularLocation>
        <location evidence="1">Cell surface</location>
    </subcellularLocation>
    <text evidence="1">Fractions of enolase are present in both the cytoplasm and on the cell surface.</text>
</comment>
<comment type="similarity">
    <text evidence="1">Belongs to the enolase family.</text>
</comment>
<protein>
    <recommendedName>
        <fullName evidence="1">Enolase</fullName>
        <ecNumber evidence="1">4.2.1.11</ecNumber>
    </recommendedName>
    <alternativeName>
        <fullName evidence="1">2-phospho-D-glycerate hydro-lyase</fullName>
    </alternativeName>
    <alternativeName>
        <fullName evidence="1">2-phosphoglycerate dehydratase</fullName>
    </alternativeName>
</protein>
<sequence length="450" mass="48872">MFGSKFKICKIEAYEVIDSRGFPTVAAKVYAKNGVFAKAMVPSGASTGEREAVELRDGDKERFNGKGVLKAVNNVNTIIAPKVVGMDCRQQTKIDELMISLDGTPNKAKLGANAILAVSLAVAKLAAMIEEKPLYKYIRQNIMGDSSDSWTMPVPMLNVINGGAHADNTIDFQEFMFMPVGAKSLKEAVRMASECFHSLQSILKSKKLDTNKGDEGGFAPNLKNADEALKLMVEAVEKAGYKPGVDADVAFALDPATSELFDADKKTYTFEKALKAKILTAKDAVKKSEDMVKYWDGLCKKYPIISIEDGLAENDWDGFQLMVKDLGSRVQIVGDDLFCTNPKIVKEGISKGVANSVLIKVNQIGTLTETIETIKAAHAAGWTCVVSHRSGETEDTTIADIAVGLSTGQIKTGSMSRSERIAKYNRLIEIENELGSKAHYPGKSTFKSIK</sequence>
<proteinExistence type="inferred from homology"/>
<name>ENO_MALP2</name>
<reference key="1">
    <citation type="journal article" date="2002" name="Nucleic Acids Res.">
        <title>The complete genomic sequence of Mycoplasma penetrans, an intracellular bacterial pathogen in humans.</title>
        <authorList>
            <person name="Sasaki Y."/>
            <person name="Ishikawa J."/>
            <person name="Yamashita A."/>
            <person name="Oshima K."/>
            <person name="Kenri T."/>
            <person name="Furuya K."/>
            <person name="Yoshino C."/>
            <person name="Horino A."/>
            <person name="Shiba T."/>
            <person name="Sasaki T."/>
            <person name="Hattori M."/>
        </authorList>
    </citation>
    <scope>NUCLEOTIDE SEQUENCE [LARGE SCALE GENOMIC DNA]</scope>
    <source>
        <strain>HF-2</strain>
    </source>
</reference>
<feature type="chain" id="PRO_0000133929" description="Enolase">
    <location>
        <begin position="1"/>
        <end position="450"/>
    </location>
</feature>
<feature type="active site" description="Proton donor" evidence="1">
    <location>
        <position position="215"/>
    </location>
</feature>
<feature type="active site" description="Proton acceptor" evidence="1">
    <location>
        <position position="360"/>
    </location>
</feature>
<feature type="binding site" evidence="1">
    <location>
        <position position="173"/>
    </location>
    <ligand>
        <name>(2R)-2-phosphoglycerate</name>
        <dbReference type="ChEBI" id="CHEBI:58289"/>
    </ligand>
</feature>
<feature type="binding site" evidence="1">
    <location>
        <position position="254"/>
    </location>
    <ligand>
        <name>Mg(2+)</name>
        <dbReference type="ChEBI" id="CHEBI:18420"/>
    </ligand>
</feature>
<feature type="binding site" evidence="1">
    <location>
        <position position="308"/>
    </location>
    <ligand>
        <name>Mg(2+)</name>
        <dbReference type="ChEBI" id="CHEBI:18420"/>
    </ligand>
</feature>
<feature type="binding site" evidence="1">
    <location>
        <position position="335"/>
    </location>
    <ligand>
        <name>Mg(2+)</name>
        <dbReference type="ChEBI" id="CHEBI:18420"/>
    </ligand>
</feature>
<feature type="binding site" evidence="1">
    <location>
        <position position="360"/>
    </location>
    <ligand>
        <name>(2R)-2-phosphoglycerate</name>
        <dbReference type="ChEBI" id="CHEBI:58289"/>
    </ligand>
</feature>
<feature type="binding site" evidence="1">
    <location>
        <position position="389"/>
    </location>
    <ligand>
        <name>(2R)-2-phosphoglycerate</name>
        <dbReference type="ChEBI" id="CHEBI:58289"/>
    </ligand>
</feature>
<feature type="binding site" evidence="1">
    <location>
        <position position="390"/>
    </location>
    <ligand>
        <name>(2R)-2-phosphoglycerate</name>
        <dbReference type="ChEBI" id="CHEBI:58289"/>
    </ligand>
</feature>
<feature type="binding site" evidence="1">
    <location>
        <position position="411"/>
    </location>
    <ligand>
        <name>(2R)-2-phosphoglycerate</name>
        <dbReference type="ChEBI" id="CHEBI:58289"/>
    </ligand>
</feature>
<evidence type="ECO:0000255" key="1">
    <source>
        <dbReference type="HAMAP-Rule" id="MF_00318"/>
    </source>
</evidence>
<keyword id="KW-0963">Cytoplasm</keyword>
<keyword id="KW-0324">Glycolysis</keyword>
<keyword id="KW-0456">Lyase</keyword>
<keyword id="KW-0460">Magnesium</keyword>
<keyword id="KW-0479">Metal-binding</keyword>
<keyword id="KW-1185">Reference proteome</keyword>
<keyword id="KW-0964">Secreted</keyword>
<gene>
    <name evidence="1" type="primary">eno</name>
    <name type="ordered locus">MYPE3750</name>
</gene>
<accession>Q8EW32</accession>
<organism>
    <name type="scientific">Malacoplasma penetrans (strain HF-2)</name>
    <name type="common">Mycoplasma penetrans</name>
    <dbReference type="NCBI Taxonomy" id="272633"/>
    <lineage>
        <taxon>Bacteria</taxon>
        <taxon>Bacillati</taxon>
        <taxon>Mycoplasmatota</taxon>
        <taxon>Mycoplasmoidales</taxon>
        <taxon>Mycoplasmoidaceae</taxon>
        <taxon>Malacoplasma</taxon>
    </lineage>
</organism>